<keyword id="KW-0001">2Fe-2S</keyword>
<keyword id="KW-0028">Amino-acid biosynthesis</keyword>
<keyword id="KW-0100">Branched-chain amino acid biosynthesis</keyword>
<keyword id="KW-0408">Iron</keyword>
<keyword id="KW-0411">Iron-sulfur</keyword>
<keyword id="KW-0456">Lyase</keyword>
<keyword id="KW-0460">Magnesium</keyword>
<keyword id="KW-0479">Metal-binding</keyword>
<name>ILVD_VIBA3</name>
<reference key="1">
    <citation type="submission" date="2009-02" db="EMBL/GenBank/DDBJ databases">
        <title>Vibrio splendidus str. LGP32 complete genome.</title>
        <authorList>
            <person name="Mazel D."/>
            <person name="Le Roux F."/>
        </authorList>
    </citation>
    <scope>NUCLEOTIDE SEQUENCE [LARGE SCALE GENOMIC DNA]</scope>
    <source>
        <strain>LGP32</strain>
    </source>
</reference>
<protein>
    <recommendedName>
        <fullName evidence="1">Dihydroxy-acid dehydratase</fullName>
        <shortName evidence="1">DAD</shortName>
        <ecNumber evidence="1">4.2.1.9</ecNumber>
    </recommendedName>
</protein>
<gene>
    <name evidence="1" type="primary">ilvD</name>
    <name type="ordered locus">VS_3146</name>
</gene>
<sequence>MPIYRSATTTHGRNMAGARALWRATGVKDDDFGKPIIAVVNSFTQFVPGHVHLKDMGQLVAGEIEKAGGIAKEFNTIAVDDGIAMGHGGMLYSLPSRELIADSVEYMVNAHCADAMVCISNCDKITPGMMMAAMRLNIPVIFVSGGPMEAGKTKLSDQIIKLDLVDAMIQGADPTISDEQSEQVERSACPTCGSCSGMFTANSMNCLTEALGLSQPGNGSMLATHADREELFINAGKRIVDLTKRYYEQDDESALPRNIANRAAFDNAMALDIAMGGSSNTVLHLLAAAQEGDIDFDMGDIDEMSRRVPHLCKVAPSTPKYHMEDVHRAGGVMAILGELDRAGLLNNQTRTVLGLSMQEQLAQYDIMQTEDEAVLKFFRAGPAGIRTTKAFSQDCRWDRLDDDRKEGCIRTKENAFSQEGGLAVLSGNIAVDGCIVKTAGVDEENLKFQGPAIVFESQDTAVDGILAGKVKAGEVVVIRYEGPKGGPGMQEMLYPTTYLKSMGLGKSCALLTDGRFSGGTSGLSIGHASPEAASGGVIGLVNTGDIITIDIPSRSITLDVPEAELEARRVKQDALGWKPENRQREVSFALKAYASMATSADKGAVRDKSKLEG</sequence>
<accession>B7VMZ0</accession>
<comment type="function">
    <text evidence="1">Functions in the biosynthesis of branched-chain amino acids. Catalyzes the dehydration of (2R,3R)-2,3-dihydroxy-3-methylpentanoate (2,3-dihydroxy-3-methylvalerate) into 2-oxo-3-methylpentanoate (2-oxo-3-methylvalerate) and of (2R)-2,3-dihydroxy-3-methylbutanoate (2,3-dihydroxyisovalerate) into 2-oxo-3-methylbutanoate (2-oxoisovalerate), the penultimate precursor to L-isoleucine and L-valine, respectively.</text>
</comment>
<comment type="catalytic activity">
    <reaction evidence="1">
        <text>(2R)-2,3-dihydroxy-3-methylbutanoate = 3-methyl-2-oxobutanoate + H2O</text>
        <dbReference type="Rhea" id="RHEA:24809"/>
        <dbReference type="ChEBI" id="CHEBI:11851"/>
        <dbReference type="ChEBI" id="CHEBI:15377"/>
        <dbReference type="ChEBI" id="CHEBI:49072"/>
        <dbReference type="EC" id="4.2.1.9"/>
    </reaction>
    <physiologicalReaction direction="left-to-right" evidence="1">
        <dbReference type="Rhea" id="RHEA:24810"/>
    </physiologicalReaction>
</comment>
<comment type="catalytic activity">
    <reaction evidence="1">
        <text>(2R,3R)-2,3-dihydroxy-3-methylpentanoate = (S)-3-methyl-2-oxopentanoate + H2O</text>
        <dbReference type="Rhea" id="RHEA:27694"/>
        <dbReference type="ChEBI" id="CHEBI:15377"/>
        <dbReference type="ChEBI" id="CHEBI:35146"/>
        <dbReference type="ChEBI" id="CHEBI:49258"/>
        <dbReference type="EC" id="4.2.1.9"/>
    </reaction>
    <physiologicalReaction direction="left-to-right" evidence="1">
        <dbReference type="Rhea" id="RHEA:27695"/>
    </physiologicalReaction>
</comment>
<comment type="cofactor">
    <cofactor evidence="1">
        <name>[2Fe-2S] cluster</name>
        <dbReference type="ChEBI" id="CHEBI:190135"/>
    </cofactor>
    <text evidence="1">Binds 1 [2Fe-2S] cluster per subunit. This cluster acts as a Lewis acid cofactor.</text>
</comment>
<comment type="cofactor">
    <cofactor evidence="1">
        <name>Mg(2+)</name>
        <dbReference type="ChEBI" id="CHEBI:18420"/>
    </cofactor>
</comment>
<comment type="pathway">
    <text evidence="1">Amino-acid biosynthesis; L-isoleucine biosynthesis; L-isoleucine from 2-oxobutanoate: step 3/4.</text>
</comment>
<comment type="pathway">
    <text evidence="1">Amino-acid biosynthesis; L-valine biosynthesis; L-valine from pyruvate: step 3/4.</text>
</comment>
<comment type="subunit">
    <text evidence="1">Homodimer.</text>
</comment>
<comment type="similarity">
    <text evidence="1">Belongs to the IlvD/Edd family.</text>
</comment>
<proteinExistence type="inferred from homology"/>
<organism>
    <name type="scientific">Vibrio atlanticus (strain LGP32)</name>
    <name type="common">Vibrio splendidus (strain Mel32)</name>
    <dbReference type="NCBI Taxonomy" id="575788"/>
    <lineage>
        <taxon>Bacteria</taxon>
        <taxon>Pseudomonadati</taxon>
        <taxon>Pseudomonadota</taxon>
        <taxon>Gammaproteobacteria</taxon>
        <taxon>Vibrionales</taxon>
        <taxon>Vibrionaceae</taxon>
        <taxon>Vibrio</taxon>
    </lineage>
</organism>
<feature type="chain" id="PRO_1000116534" description="Dihydroxy-acid dehydratase">
    <location>
        <begin position="1"/>
        <end position="613"/>
    </location>
</feature>
<feature type="active site" description="Proton acceptor" evidence="1">
    <location>
        <position position="517"/>
    </location>
</feature>
<feature type="binding site" evidence="1">
    <location>
        <position position="81"/>
    </location>
    <ligand>
        <name>Mg(2+)</name>
        <dbReference type="ChEBI" id="CHEBI:18420"/>
    </ligand>
</feature>
<feature type="binding site" evidence="1">
    <location>
        <position position="122"/>
    </location>
    <ligand>
        <name>[2Fe-2S] cluster</name>
        <dbReference type="ChEBI" id="CHEBI:190135"/>
    </ligand>
</feature>
<feature type="binding site" evidence="1">
    <location>
        <position position="123"/>
    </location>
    <ligand>
        <name>Mg(2+)</name>
        <dbReference type="ChEBI" id="CHEBI:18420"/>
    </ligand>
</feature>
<feature type="binding site" description="via carbamate group" evidence="1">
    <location>
        <position position="124"/>
    </location>
    <ligand>
        <name>Mg(2+)</name>
        <dbReference type="ChEBI" id="CHEBI:18420"/>
    </ligand>
</feature>
<feature type="binding site" evidence="1">
    <location>
        <position position="195"/>
    </location>
    <ligand>
        <name>[2Fe-2S] cluster</name>
        <dbReference type="ChEBI" id="CHEBI:190135"/>
    </ligand>
</feature>
<feature type="binding site" evidence="1">
    <location>
        <position position="491"/>
    </location>
    <ligand>
        <name>Mg(2+)</name>
        <dbReference type="ChEBI" id="CHEBI:18420"/>
    </ligand>
</feature>
<feature type="modified residue" description="N6-carboxylysine" evidence="1">
    <location>
        <position position="124"/>
    </location>
</feature>
<evidence type="ECO:0000255" key="1">
    <source>
        <dbReference type="HAMAP-Rule" id="MF_00012"/>
    </source>
</evidence>
<dbReference type="EC" id="4.2.1.9" evidence="1"/>
<dbReference type="EMBL" id="FM954972">
    <property type="protein sequence ID" value="CAV20398.1"/>
    <property type="molecule type" value="Genomic_DNA"/>
</dbReference>
<dbReference type="SMR" id="B7VMZ0"/>
<dbReference type="STRING" id="575788.VS_3146"/>
<dbReference type="KEGG" id="vsp:VS_3146"/>
<dbReference type="PATRIC" id="fig|575788.5.peg.4307"/>
<dbReference type="eggNOG" id="COG0129">
    <property type="taxonomic scope" value="Bacteria"/>
</dbReference>
<dbReference type="HOGENOM" id="CLU_014271_4_2_6"/>
<dbReference type="UniPathway" id="UPA00047">
    <property type="reaction ID" value="UER00057"/>
</dbReference>
<dbReference type="UniPathway" id="UPA00049">
    <property type="reaction ID" value="UER00061"/>
</dbReference>
<dbReference type="Proteomes" id="UP000009100">
    <property type="component" value="Chromosome 1"/>
</dbReference>
<dbReference type="GO" id="GO:0005829">
    <property type="term" value="C:cytosol"/>
    <property type="evidence" value="ECO:0007669"/>
    <property type="project" value="TreeGrafter"/>
</dbReference>
<dbReference type="GO" id="GO:0051537">
    <property type="term" value="F:2 iron, 2 sulfur cluster binding"/>
    <property type="evidence" value="ECO:0007669"/>
    <property type="project" value="UniProtKB-UniRule"/>
</dbReference>
<dbReference type="GO" id="GO:0004160">
    <property type="term" value="F:dihydroxy-acid dehydratase activity"/>
    <property type="evidence" value="ECO:0007669"/>
    <property type="project" value="UniProtKB-UniRule"/>
</dbReference>
<dbReference type="GO" id="GO:0000287">
    <property type="term" value="F:magnesium ion binding"/>
    <property type="evidence" value="ECO:0007669"/>
    <property type="project" value="UniProtKB-UniRule"/>
</dbReference>
<dbReference type="GO" id="GO:0009097">
    <property type="term" value="P:isoleucine biosynthetic process"/>
    <property type="evidence" value="ECO:0007669"/>
    <property type="project" value="UniProtKB-UniRule"/>
</dbReference>
<dbReference type="GO" id="GO:0009099">
    <property type="term" value="P:L-valine biosynthetic process"/>
    <property type="evidence" value="ECO:0007669"/>
    <property type="project" value="UniProtKB-UniRule"/>
</dbReference>
<dbReference type="FunFam" id="3.50.30.80:FF:000001">
    <property type="entry name" value="Dihydroxy-acid dehydratase"/>
    <property type="match status" value="1"/>
</dbReference>
<dbReference type="Gene3D" id="3.50.30.80">
    <property type="entry name" value="IlvD/EDD C-terminal domain-like"/>
    <property type="match status" value="1"/>
</dbReference>
<dbReference type="HAMAP" id="MF_00012">
    <property type="entry name" value="IlvD"/>
    <property type="match status" value="1"/>
</dbReference>
<dbReference type="InterPro" id="IPR042096">
    <property type="entry name" value="Dihydro-acid_dehy_C"/>
</dbReference>
<dbReference type="InterPro" id="IPR004404">
    <property type="entry name" value="DihydroxyA_deHydtase"/>
</dbReference>
<dbReference type="InterPro" id="IPR020558">
    <property type="entry name" value="DiOHA_6PGluconate_deHydtase_CS"/>
</dbReference>
<dbReference type="InterPro" id="IPR056740">
    <property type="entry name" value="ILV_EDD_C"/>
</dbReference>
<dbReference type="InterPro" id="IPR000581">
    <property type="entry name" value="ILV_EDD_N"/>
</dbReference>
<dbReference type="InterPro" id="IPR037237">
    <property type="entry name" value="IlvD/EDD_N"/>
</dbReference>
<dbReference type="NCBIfam" id="TIGR00110">
    <property type="entry name" value="ilvD"/>
    <property type="match status" value="1"/>
</dbReference>
<dbReference type="NCBIfam" id="NF009103">
    <property type="entry name" value="PRK12448.1"/>
    <property type="match status" value="1"/>
</dbReference>
<dbReference type="PANTHER" id="PTHR43661">
    <property type="entry name" value="D-XYLONATE DEHYDRATASE"/>
    <property type="match status" value="1"/>
</dbReference>
<dbReference type="PANTHER" id="PTHR43661:SF3">
    <property type="entry name" value="D-XYLONATE DEHYDRATASE YAGF-RELATED"/>
    <property type="match status" value="1"/>
</dbReference>
<dbReference type="Pfam" id="PF24877">
    <property type="entry name" value="ILV_EDD_C"/>
    <property type="match status" value="1"/>
</dbReference>
<dbReference type="Pfam" id="PF00920">
    <property type="entry name" value="ILVD_EDD_N"/>
    <property type="match status" value="1"/>
</dbReference>
<dbReference type="SUPFAM" id="SSF143975">
    <property type="entry name" value="IlvD/EDD N-terminal domain-like"/>
    <property type="match status" value="1"/>
</dbReference>
<dbReference type="SUPFAM" id="SSF52016">
    <property type="entry name" value="LeuD/IlvD-like"/>
    <property type="match status" value="1"/>
</dbReference>
<dbReference type="PROSITE" id="PS00886">
    <property type="entry name" value="ILVD_EDD_1"/>
    <property type="match status" value="1"/>
</dbReference>
<dbReference type="PROSITE" id="PS00887">
    <property type="entry name" value="ILVD_EDD_2"/>
    <property type="match status" value="1"/>
</dbReference>